<protein>
    <recommendedName>
        <fullName evidence="1">2-C-methyl-D-erythritol 4-phosphate cytidylyltransferase</fullName>
        <ecNumber evidence="1">2.7.7.60</ecNumber>
    </recommendedName>
    <alternativeName>
        <fullName evidence="1">4-diphosphocytidyl-2C-methyl-D-erythritol synthase</fullName>
    </alternativeName>
    <alternativeName>
        <fullName evidence="1">MEP cytidylyltransferase</fullName>
        <shortName evidence="1">MCT</shortName>
    </alternativeName>
</protein>
<sequence>MSMTHTTPLVPKNVAIVPAAGIGARMAAGMPKQYLTLGAQSILGHTLDALLSHPQIAQVIVALHPHDDMFLGLPQAKHSKLLTVIGGGERADSVLAALAVAPQDAWALVHDAARPCLTHSDIDKLLASTSEFPQGAILAMPVRDTMKRSDDTGVINHTVDRALLWHALTPQYFPVAELLTNLSAALNAGVVITDEASAMEWAGVFPGLVSGRADNIKVTHPDDLHLAGLFMAHLSAKPLVE</sequence>
<gene>
    <name evidence="1" type="primary">ispD</name>
    <name type="ordered locus">Sden_1198</name>
</gene>
<comment type="function">
    <text evidence="1">Catalyzes the formation of 4-diphosphocytidyl-2-C-methyl-D-erythritol from CTP and 2-C-methyl-D-erythritol 4-phosphate (MEP).</text>
</comment>
<comment type="catalytic activity">
    <reaction evidence="1">
        <text>2-C-methyl-D-erythritol 4-phosphate + CTP + H(+) = 4-CDP-2-C-methyl-D-erythritol + diphosphate</text>
        <dbReference type="Rhea" id="RHEA:13429"/>
        <dbReference type="ChEBI" id="CHEBI:15378"/>
        <dbReference type="ChEBI" id="CHEBI:33019"/>
        <dbReference type="ChEBI" id="CHEBI:37563"/>
        <dbReference type="ChEBI" id="CHEBI:57823"/>
        <dbReference type="ChEBI" id="CHEBI:58262"/>
        <dbReference type="EC" id="2.7.7.60"/>
    </reaction>
</comment>
<comment type="pathway">
    <text evidence="1">Isoprenoid biosynthesis; isopentenyl diphosphate biosynthesis via DXP pathway; isopentenyl diphosphate from 1-deoxy-D-xylulose 5-phosphate: step 2/6.</text>
</comment>
<comment type="similarity">
    <text evidence="1">Belongs to the IspD/TarI cytidylyltransferase family. IspD subfamily.</text>
</comment>
<feature type="chain" id="PRO_1000191069" description="2-C-methyl-D-erythritol 4-phosphate cytidylyltransferase">
    <location>
        <begin position="1"/>
        <end position="241"/>
    </location>
</feature>
<feature type="site" description="Transition state stabilizer" evidence="1">
    <location>
        <position position="25"/>
    </location>
</feature>
<feature type="site" description="Transition state stabilizer" evidence="1">
    <location>
        <position position="32"/>
    </location>
</feature>
<feature type="site" description="Positions MEP for the nucleophilic attack" evidence="1">
    <location>
        <position position="161"/>
    </location>
</feature>
<feature type="site" description="Positions MEP for the nucleophilic attack" evidence="1">
    <location>
        <position position="217"/>
    </location>
</feature>
<name>ISPD_SHEDO</name>
<organism>
    <name type="scientific">Shewanella denitrificans (strain OS217 / ATCC BAA-1090 / DSM 15013)</name>
    <dbReference type="NCBI Taxonomy" id="318161"/>
    <lineage>
        <taxon>Bacteria</taxon>
        <taxon>Pseudomonadati</taxon>
        <taxon>Pseudomonadota</taxon>
        <taxon>Gammaproteobacteria</taxon>
        <taxon>Alteromonadales</taxon>
        <taxon>Shewanellaceae</taxon>
        <taxon>Shewanella</taxon>
    </lineage>
</organism>
<proteinExistence type="inferred from homology"/>
<accession>Q12PZ2</accession>
<reference key="1">
    <citation type="submission" date="2006-03" db="EMBL/GenBank/DDBJ databases">
        <title>Complete sequence of Shewanella denitrificans OS217.</title>
        <authorList>
            <consortium name="US DOE Joint Genome Institute"/>
            <person name="Copeland A."/>
            <person name="Lucas S."/>
            <person name="Lapidus A."/>
            <person name="Barry K."/>
            <person name="Detter J.C."/>
            <person name="Glavina del Rio T."/>
            <person name="Hammon N."/>
            <person name="Israni S."/>
            <person name="Dalin E."/>
            <person name="Tice H."/>
            <person name="Pitluck S."/>
            <person name="Brettin T."/>
            <person name="Bruce D."/>
            <person name="Han C."/>
            <person name="Tapia R."/>
            <person name="Gilna P."/>
            <person name="Kiss H."/>
            <person name="Schmutz J."/>
            <person name="Larimer F."/>
            <person name="Land M."/>
            <person name="Hauser L."/>
            <person name="Kyrpides N."/>
            <person name="Lykidis A."/>
            <person name="Richardson P."/>
        </authorList>
    </citation>
    <scope>NUCLEOTIDE SEQUENCE [LARGE SCALE GENOMIC DNA]</scope>
    <source>
        <strain>OS217 / ATCC BAA-1090 / DSM 15013</strain>
    </source>
</reference>
<dbReference type="EC" id="2.7.7.60" evidence="1"/>
<dbReference type="EMBL" id="CP000302">
    <property type="protein sequence ID" value="ABE54484.1"/>
    <property type="molecule type" value="Genomic_DNA"/>
</dbReference>
<dbReference type="RefSeq" id="WP_011495644.1">
    <property type="nucleotide sequence ID" value="NC_007954.1"/>
</dbReference>
<dbReference type="SMR" id="Q12PZ2"/>
<dbReference type="STRING" id="318161.Sden_1198"/>
<dbReference type="KEGG" id="sdn:Sden_1198"/>
<dbReference type="eggNOG" id="COG1211">
    <property type="taxonomic scope" value="Bacteria"/>
</dbReference>
<dbReference type="HOGENOM" id="CLU_061281_3_1_6"/>
<dbReference type="OrthoDB" id="9806837at2"/>
<dbReference type="UniPathway" id="UPA00056">
    <property type="reaction ID" value="UER00093"/>
</dbReference>
<dbReference type="Proteomes" id="UP000001982">
    <property type="component" value="Chromosome"/>
</dbReference>
<dbReference type="GO" id="GO:0050518">
    <property type="term" value="F:2-C-methyl-D-erythritol 4-phosphate cytidylyltransferase activity"/>
    <property type="evidence" value="ECO:0007669"/>
    <property type="project" value="UniProtKB-UniRule"/>
</dbReference>
<dbReference type="GO" id="GO:0019288">
    <property type="term" value="P:isopentenyl diphosphate biosynthetic process, methylerythritol 4-phosphate pathway"/>
    <property type="evidence" value="ECO:0007669"/>
    <property type="project" value="UniProtKB-UniRule"/>
</dbReference>
<dbReference type="CDD" id="cd02516">
    <property type="entry name" value="CDP-ME_synthetase"/>
    <property type="match status" value="1"/>
</dbReference>
<dbReference type="FunFam" id="3.90.550.10:FF:000003">
    <property type="entry name" value="2-C-methyl-D-erythritol 4-phosphate cytidylyltransferase"/>
    <property type="match status" value="1"/>
</dbReference>
<dbReference type="Gene3D" id="3.90.550.10">
    <property type="entry name" value="Spore Coat Polysaccharide Biosynthesis Protein SpsA, Chain A"/>
    <property type="match status" value="1"/>
</dbReference>
<dbReference type="HAMAP" id="MF_00108">
    <property type="entry name" value="IspD"/>
    <property type="match status" value="1"/>
</dbReference>
<dbReference type="InterPro" id="IPR001228">
    <property type="entry name" value="IspD"/>
</dbReference>
<dbReference type="InterPro" id="IPR034683">
    <property type="entry name" value="IspD/TarI"/>
</dbReference>
<dbReference type="InterPro" id="IPR050088">
    <property type="entry name" value="IspD/TarI_cytidylyltransf_bact"/>
</dbReference>
<dbReference type="InterPro" id="IPR029044">
    <property type="entry name" value="Nucleotide-diphossugar_trans"/>
</dbReference>
<dbReference type="NCBIfam" id="TIGR00453">
    <property type="entry name" value="ispD"/>
    <property type="match status" value="1"/>
</dbReference>
<dbReference type="PANTHER" id="PTHR32125">
    <property type="entry name" value="2-C-METHYL-D-ERYTHRITOL 4-PHOSPHATE CYTIDYLYLTRANSFERASE, CHLOROPLASTIC"/>
    <property type="match status" value="1"/>
</dbReference>
<dbReference type="PANTHER" id="PTHR32125:SF4">
    <property type="entry name" value="2-C-METHYL-D-ERYTHRITOL 4-PHOSPHATE CYTIDYLYLTRANSFERASE, CHLOROPLASTIC"/>
    <property type="match status" value="1"/>
</dbReference>
<dbReference type="Pfam" id="PF01128">
    <property type="entry name" value="IspD"/>
    <property type="match status" value="1"/>
</dbReference>
<dbReference type="SUPFAM" id="SSF53448">
    <property type="entry name" value="Nucleotide-diphospho-sugar transferases"/>
    <property type="match status" value="1"/>
</dbReference>
<keyword id="KW-0414">Isoprene biosynthesis</keyword>
<keyword id="KW-0548">Nucleotidyltransferase</keyword>
<keyword id="KW-1185">Reference proteome</keyword>
<keyword id="KW-0808">Transferase</keyword>
<evidence type="ECO:0000255" key="1">
    <source>
        <dbReference type="HAMAP-Rule" id="MF_00108"/>
    </source>
</evidence>